<protein>
    <recommendedName>
        <fullName evidence="2">tRNA-splicing endonuclease</fullName>
        <ecNumber evidence="2">4.6.1.16</ecNumber>
    </recommendedName>
    <alternativeName>
        <fullName evidence="2">tRNA-intron endonuclease</fullName>
    </alternativeName>
</protein>
<sequence length="351" mass="40465">MRAEIVKDRVLVEKKAINEFYNNGYYGRPKSSGLELTLIEAVYLAFRGKIEVEHEGKVLEFSDLFKEASILQPSFELKYIVYKDLRERGFYVQPGVTDFRVYPRGSHPGKGAAKQFIYVRSERAPMPLRDLLRSLAAAENVRKQMVLAIVDEESDITFYDVKRPRLKGEMKEPLYPDINADATFLEDRVVVWDEEASKTLFENGFYGKPLDSQRLQLSLVESRYLLEKGVLNINNRQDESMDVDAFSKMASEIEPEFNLKSSVYTDLRDKGVVPKTGFKFGSHFRVYSQVESPTKIPHSEYLIHSIPMDHEFTLPVMSRAIRLANSVRKRMLYAILTDDGVDYIDIGRLKM</sequence>
<feature type="chain" id="PRO_0000309817" description="tRNA-splicing endonuclease">
    <location>
        <begin position="1"/>
        <end position="351"/>
    </location>
</feature>
<feature type="active site" evidence="2">
    <location>
        <position position="287"/>
    </location>
</feature>
<feature type="active site" evidence="2">
    <location>
        <position position="298"/>
    </location>
</feature>
<feature type="active site" evidence="2">
    <location>
        <position position="329"/>
    </location>
</feature>
<keyword id="KW-0456">Lyase</keyword>
<keyword id="KW-0819">tRNA processing</keyword>
<reference key="1">
    <citation type="journal article" date="2009" name="ISME J.">
        <title>The genome sequence of the psychrophilic archaeon, Methanococcoides burtonii: the role of genome evolution in cold adaptation.</title>
        <authorList>
            <person name="Allen M.A."/>
            <person name="Lauro F.M."/>
            <person name="Williams T.J."/>
            <person name="Burg D."/>
            <person name="Siddiqui K.S."/>
            <person name="De Francisci D."/>
            <person name="Chong K.W."/>
            <person name="Pilak O."/>
            <person name="Chew H.H."/>
            <person name="De Maere M.Z."/>
            <person name="Ting L."/>
            <person name="Katrib M."/>
            <person name="Ng C."/>
            <person name="Sowers K.R."/>
            <person name="Galperin M.Y."/>
            <person name="Anderson I.J."/>
            <person name="Ivanova N."/>
            <person name="Dalin E."/>
            <person name="Martinez M."/>
            <person name="Lapidus A."/>
            <person name="Hauser L."/>
            <person name="Land M."/>
            <person name="Thomas T."/>
            <person name="Cavicchioli R."/>
        </authorList>
    </citation>
    <scope>NUCLEOTIDE SEQUENCE [LARGE SCALE GENOMIC DNA]</scope>
    <source>
        <strain>DSM 6242 / NBRC 107633 / OCM 468 / ACE-M</strain>
    </source>
</reference>
<comment type="function">
    <text evidence="1">Endonuclease that removes tRNA introns. Cleaves pre-tRNA at the 5'- and 3'-splice sites to release the intron. The products are an intron and two tRNA half-molecules bearing 2',3' cyclic phosphate and 5'-OH termini. Recognizes a pseudosymmetric substrate in which 2 bulged loops of 3 bases are separated by a stem of 4 bp (By similarity).</text>
</comment>
<comment type="catalytic activity">
    <reaction evidence="2">
        <text>pretRNA = a 3'-half-tRNA molecule with a 5'-OH end + a 5'-half-tRNA molecule with a 2',3'-cyclic phosphate end + an intron with a 2',3'-cyclic phosphate and a 5'-hydroxyl terminus.</text>
        <dbReference type="EC" id="4.6.1.16"/>
    </reaction>
</comment>
<comment type="subunit">
    <text evidence="2">Homodimer.</text>
</comment>
<comment type="similarity">
    <text evidence="2">Belongs to the tRNA-intron endonuclease family. Archaeal long subfamily.</text>
</comment>
<evidence type="ECO:0000250" key="1"/>
<evidence type="ECO:0000255" key="2">
    <source>
        <dbReference type="HAMAP-Rule" id="MF_01834"/>
    </source>
</evidence>
<proteinExistence type="inferred from homology"/>
<accession>Q12X51</accession>
<organism>
    <name type="scientific">Methanococcoides burtonii (strain DSM 6242 / NBRC 107633 / OCM 468 / ACE-M)</name>
    <dbReference type="NCBI Taxonomy" id="259564"/>
    <lineage>
        <taxon>Archaea</taxon>
        <taxon>Methanobacteriati</taxon>
        <taxon>Methanobacteriota</taxon>
        <taxon>Stenosarchaea group</taxon>
        <taxon>Methanomicrobia</taxon>
        <taxon>Methanosarcinales</taxon>
        <taxon>Methanosarcinaceae</taxon>
        <taxon>Methanococcoides</taxon>
    </lineage>
</organism>
<dbReference type="EC" id="4.6.1.16" evidence="2"/>
<dbReference type="EMBL" id="CP000300">
    <property type="protein sequence ID" value="ABE51975.1"/>
    <property type="molecule type" value="Genomic_DNA"/>
</dbReference>
<dbReference type="RefSeq" id="WP_011499124.1">
    <property type="nucleotide sequence ID" value="NC_007955.1"/>
</dbReference>
<dbReference type="SMR" id="Q12X51"/>
<dbReference type="STRING" id="259564.Mbur_1040"/>
<dbReference type="GeneID" id="3998780"/>
<dbReference type="KEGG" id="mbu:Mbur_1040"/>
<dbReference type="HOGENOM" id="CLU_791347_0_0_2"/>
<dbReference type="OrthoDB" id="46045at2157"/>
<dbReference type="Proteomes" id="UP000001979">
    <property type="component" value="Chromosome"/>
</dbReference>
<dbReference type="GO" id="GO:0005737">
    <property type="term" value="C:cytoplasm"/>
    <property type="evidence" value="ECO:0007669"/>
    <property type="project" value="TreeGrafter"/>
</dbReference>
<dbReference type="GO" id="GO:0016829">
    <property type="term" value="F:lyase activity"/>
    <property type="evidence" value="ECO:0007669"/>
    <property type="project" value="UniProtKB-KW"/>
</dbReference>
<dbReference type="GO" id="GO:0003676">
    <property type="term" value="F:nucleic acid binding"/>
    <property type="evidence" value="ECO:0007669"/>
    <property type="project" value="InterPro"/>
</dbReference>
<dbReference type="GO" id="GO:0000213">
    <property type="term" value="F:tRNA-intron endonuclease activity"/>
    <property type="evidence" value="ECO:0007669"/>
    <property type="project" value="UniProtKB-UniRule"/>
</dbReference>
<dbReference type="GO" id="GO:0006388">
    <property type="term" value="P:tRNA splicing, via endonucleolytic cleavage and ligation"/>
    <property type="evidence" value="ECO:0007669"/>
    <property type="project" value="UniProtKB-UniRule"/>
</dbReference>
<dbReference type="CDD" id="cd22363">
    <property type="entry name" value="tRNA-intron_lyase_C"/>
    <property type="match status" value="2"/>
</dbReference>
<dbReference type="Gene3D" id="3.40.1350.10">
    <property type="match status" value="1"/>
</dbReference>
<dbReference type="Gene3D" id="3.40.1350.150">
    <property type="match status" value="1"/>
</dbReference>
<dbReference type="Gene3D" id="3.40.1170.20">
    <property type="entry name" value="tRNA intron endonuclease, N-terminal domain"/>
    <property type="match status" value="1"/>
</dbReference>
<dbReference type="HAMAP" id="MF_01834">
    <property type="entry name" value="EndA_long"/>
    <property type="match status" value="1"/>
</dbReference>
<dbReference type="InterPro" id="IPR011856">
    <property type="entry name" value="tRNA_endonuc-like_dom_sf"/>
</dbReference>
<dbReference type="InterPro" id="IPR036167">
    <property type="entry name" value="tRNA_intron_Endo_cat-like_sf"/>
</dbReference>
<dbReference type="InterPro" id="IPR006677">
    <property type="entry name" value="tRNA_intron_Endonuc_cat-like"/>
</dbReference>
<dbReference type="InterPro" id="IPR006678">
    <property type="entry name" value="tRNA_intron_Endonuc_N"/>
</dbReference>
<dbReference type="InterPro" id="IPR036740">
    <property type="entry name" value="tRNA_intron_Endonuc_N_sf"/>
</dbReference>
<dbReference type="InterPro" id="IPR006676">
    <property type="entry name" value="tRNA_splic"/>
</dbReference>
<dbReference type="InterPro" id="IPR023516">
    <property type="entry name" value="tRNA_splic_arch_long"/>
</dbReference>
<dbReference type="NCBIfam" id="TIGR00324">
    <property type="entry name" value="endA"/>
    <property type="match status" value="2"/>
</dbReference>
<dbReference type="NCBIfam" id="NF006795">
    <property type="entry name" value="PRK09300.1-3"/>
    <property type="match status" value="1"/>
</dbReference>
<dbReference type="PANTHER" id="PTHR21227">
    <property type="entry name" value="TRNA-SPLICING ENDONUCLEASE SUBUNIT SEN2"/>
    <property type="match status" value="1"/>
</dbReference>
<dbReference type="PANTHER" id="PTHR21227:SF0">
    <property type="entry name" value="TRNA-SPLICING ENDONUCLEASE SUBUNIT SEN2"/>
    <property type="match status" value="1"/>
</dbReference>
<dbReference type="Pfam" id="PF01974">
    <property type="entry name" value="tRNA_int_endo"/>
    <property type="match status" value="2"/>
</dbReference>
<dbReference type="Pfam" id="PF02778">
    <property type="entry name" value="tRNA_int_endo_N"/>
    <property type="match status" value="2"/>
</dbReference>
<dbReference type="SUPFAM" id="SSF53032">
    <property type="entry name" value="tRNA-intron endonuclease catalytic domain-like"/>
    <property type="match status" value="2"/>
</dbReference>
<dbReference type="SUPFAM" id="SSF55267">
    <property type="entry name" value="tRNA-intron endonuclease N-terminal domain-like"/>
    <property type="match status" value="2"/>
</dbReference>
<gene>
    <name evidence="2" type="primary">endA</name>
    <name type="ordered locus">Mbur_1040</name>
</gene>
<name>ENDA_METBU</name>